<keyword id="KW-0067">ATP-binding</keyword>
<keyword id="KW-0963">Cytoplasm</keyword>
<keyword id="KW-0418">Kinase</keyword>
<keyword id="KW-0547">Nucleotide-binding</keyword>
<keyword id="KW-0539">Nucleus</keyword>
<keyword id="KW-0665">Pyrimidine biosynthesis</keyword>
<keyword id="KW-0808">Transferase</keyword>
<proteinExistence type="evidence at protein level"/>
<protein>
    <recommendedName>
        <fullName evidence="2">UMP-CMP kinase</fullName>
        <ecNumber evidence="2">2.7.4.14</ecNumber>
    </recommendedName>
    <alternativeName>
        <fullName evidence="2">Deoxycytidylate kinase</fullName>
        <shortName evidence="2">CK</shortName>
        <shortName evidence="2">dCMP kinase</shortName>
    </alternativeName>
    <alternativeName>
        <fullName evidence="2">Uridine monophosphate/cytidine monophosphate kinase</fullName>
        <shortName evidence="2">UMP/CMP kinase</shortName>
        <shortName evidence="2">UMP/CMPK</shortName>
    </alternativeName>
</protein>
<sequence>MPTIIDKLSDALHLHSHQSTFDSKVTVIFVLGGPGAGKGTQCARLVEDFSFSHLSAGDLLRAEQHREGSEYGQLIQTCIKEGSIVPMEVTVKLLENAMTATLAERRSGEGWTDGQGRFLIDGFPRKMDQAEKFEHDVGKATAVLFFSTTQEVMLDRLLERGKTSGREDDNVESIKKRFNTYKEQTMPVIEHYEKLGKVIEIDSSVSIEEVHQKTRSAVAKLLSGSTA</sequence>
<gene>
    <name type="primary">uck1</name>
</gene>
<organism>
    <name type="scientific">Lentinula edodes</name>
    <name type="common">Shiitake mushroom</name>
    <name type="synonym">Lentinus edodes</name>
    <dbReference type="NCBI Taxonomy" id="5353"/>
    <lineage>
        <taxon>Eukaryota</taxon>
        <taxon>Fungi</taxon>
        <taxon>Dikarya</taxon>
        <taxon>Basidiomycota</taxon>
        <taxon>Agaricomycotina</taxon>
        <taxon>Agaricomycetes</taxon>
        <taxon>Agaricomycetidae</taxon>
        <taxon>Agaricales</taxon>
        <taxon>Marasmiineae</taxon>
        <taxon>Omphalotaceae</taxon>
        <taxon>Lentinula</taxon>
    </lineage>
</organism>
<accession>O59845</accession>
<dbReference type="EC" id="2.7.4.14" evidence="2"/>
<dbReference type="EMBL" id="AB005742">
    <property type="protein sequence ID" value="BAA28693.1"/>
    <property type="molecule type" value="Genomic_DNA"/>
</dbReference>
<dbReference type="PIR" id="JC6572">
    <property type="entry name" value="JC6572"/>
</dbReference>
<dbReference type="SMR" id="O59845"/>
<dbReference type="GO" id="GO:0005737">
    <property type="term" value="C:cytoplasm"/>
    <property type="evidence" value="ECO:0007669"/>
    <property type="project" value="UniProtKB-SubCell"/>
</dbReference>
<dbReference type="GO" id="GO:0005634">
    <property type="term" value="C:nucleus"/>
    <property type="evidence" value="ECO:0007669"/>
    <property type="project" value="UniProtKB-SubCell"/>
</dbReference>
<dbReference type="GO" id="GO:0004127">
    <property type="term" value="F:(d)CMP kinase activity"/>
    <property type="evidence" value="ECO:0007669"/>
    <property type="project" value="InterPro"/>
</dbReference>
<dbReference type="GO" id="GO:0005524">
    <property type="term" value="F:ATP binding"/>
    <property type="evidence" value="ECO:0007669"/>
    <property type="project" value="UniProtKB-KW"/>
</dbReference>
<dbReference type="GO" id="GO:0033862">
    <property type="term" value="F:UMP kinase activity"/>
    <property type="evidence" value="ECO:0007669"/>
    <property type="project" value="RHEA"/>
</dbReference>
<dbReference type="GO" id="GO:0006207">
    <property type="term" value="P:'de novo' pyrimidine nucleobase biosynthetic process"/>
    <property type="evidence" value="ECO:0007669"/>
    <property type="project" value="InterPro"/>
</dbReference>
<dbReference type="GO" id="GO:0006221">
    <property type="term" value="P:pyrimidine nucleotide biosynthetic process"/>
    <property type="evidence" value="ECO:0007669"/>
    <property type="project" value="UniProtKB-UniRule"/>
</dbReference>
<dbReference type="CDD" id="cd01428">
    <property type="entry name" value="ADK"/>
    <property type="match status" value="1"/>
</dbReference>
<dbReference type="FunFam" id="3.40.50.300:FF:000315">
    <property type="entry name" value="Adenylate kinase 1"/>
    <property type="match status" value="1"/>
</dbReference>
<dbReference type="Gene3D" id="3.40.50.300">
    <property type="entry name" value="P-loop containing nucleotide triphosphate hydrolases"/>
    <property type="match status" value="1"/>
</dbReference>
<dbReference type="HAMAP" id="MF_00235">
    <property type="entry name" value="Adenylate_kinase_Adk"/>
    <property type="match status" value="1"/>
</dbReference>
<dbReference type="HAMAP" id="MF_03172">
    <property type="entry name" value="Adenylate_kinase_UMP_CMP_kin"/>
    <property type="match status" value="1"/>
</dbReference>
<dbReference type="InterPro" id="IPR000850">
    <property type="entry name" value="Adenylat/UMP-CMP_kin"/>
</dbReference>
<dbReference type="InterPro" id="IPR033690">
    <property type="entry name" value="Adenylat_kinase_CS"/>
</dbReference>
<dbReference type="InterPro" id="IPR027417">
    <property type="entry name" value="P-loop_NTPase"/>
</dbReference>
<dbReference type="InterPro" id="IPR006266">
    <property type="entry name" value="UMP_CMP_kinase"/>
</dbReference>
<dbReference type="NCBIfam" id="TIGR01359">
    <property type="entry name" value="UMP_CMP_kin_fam"/>
    <property type="match status" value="1"/>
</dbReference>
<dbReference type="PANTHER" id="PTHR23359">
    <property type="entry name" value="NUCLEOTIDE KINASE"/>
    <property type="match status" value="1"/>
</dbReference>
<dbReference type="Pfam" id="PF00406">
    <property type="entry name" value="ADK"/>
    <property type="match status" value="1"/>
</dbReference>
<dbReference type="PRINTS" id="PR00094">
    <property type="entry name" value="ADENYLTKNASE"/>
</dbReference>
<dbReference type="SUPFAM" id="SSF52540">
    <property type="entry name" value="P-loop containing nucleoside triphosphate hydrolases"/>
    <property type="match status" value="1"/>
</dbReference>
<dbReference type="PROSITE" id="PS00113">
    <property type="entry name" value="ADENYLATE_KINASE"/>
    <property type="match status" value="1"/>
</dbReference>
<reference key="1">
    <citation type="journal article" date="1998" name="Gene">
        <title>Cloning, sequence analysis and expression of the basidiomycete Lentinus edodes gene uck1, encoding UMP-CMP kinase, the homologue of Saccharomyces cerevisae URA6 gene.</title>
        <authorList>
            <person name="Kaneko S."/>
            <person name="Miyazaki Y."/>
            <person name="Yasuda T."/>
            <person name="Shishido K."/>
        </authorList>
    </citation>
    <scope>NUCLEOTIDE SEQUENCE [GENOMIC DNA]</scope>
    <scope>FUNCTION</scope>
    <scope>CATALYTIC ACTIVITY</scope>
    <scope>SUBSTRATE SPECIFICITY</scope>
</reference>
<feature type="chain" id="PRO_0000422251" description="UMP-CMP kinase">
    <location>
        <begin position="1"/>
        <end position="227"/>
    </location>
</feature>
<feature type="region of interest" description="NMP" evidence="2">
    <location>
        <begin position="55"/>
        <end position="85"/>
    </location>
</feature>
<feature type="region of interest" description="LID" evidence="2">
    <location>
        <begin position="159"/>
        <end position="169"/>
    </location>
</feature>
<feature type="binding site" evidence="2">
    <location>
        <begin position="35"/>
        <end position="40"/>
    </location>
    <ligand>
        <name>ATP</name>
        <dbReference type="ChEBI" id="CHEBI:30616"/>
    </ligand>
</feature>
<feature type="binding site" evidence="2">
    <location>
        <position position="61"/>
    </location>
    <ligand>
        <name>a ribonucleoside 5'-phosphate</name>
        <dbReference type="ChEBI" id="CHEBI:58043"/>
    </ligand>
</feature>
<feature type="binding site" evidence="2">
    <location>
        <begin position="83"/>
        <end position="85"/>
    </location>
    <ligand>
        <name>a ribonucleoside 5'-phosphate</name>
        <dbReference type="ChEBI" id="CHEBI:58043"/>
    </ligand>
</feature>
<feature type="binding site" evidence="2">
    <location>
        <begin position="122"/>
        <end position="125"/>
    </location>
    <ligand>
        <name>a ribonucleoside 5'-phosphate</name>
        <dbReference type="ChEBI" id="CHEBI:58043"/>
    </ligand>
</feature>
<feature type="binding site" evidence="2">
    <location>
        <position position="129"/>
    </location>
    <ligand>
        <name>a ribonucleoside 5'-phosphate</name>
        <dbReference type="ChEBI" id="CHEBI:58043"/>
    </ligand>
</feature>
<feature type="binding site" evidence="2">
    <location>
        <position position="160"/>
    </location>
    <ligand>
        <name>ATP</name>
        <dbReference type="ChEBI" id="CHEBI:30616"/>
    </ligand>
</feature>
<feature type="binding site" evidence="2">
    <location>
        <position position="166"/>
    </location>
    <ligand>
        <name>a ribonucleoside 5'-phosphate</name>
        <dbReference type="ChEBI" id="CHEBI:58043"/>
    </ligand>
</feature>
<feature type="binding site" evidence="2">
    <location>
        <position position="177"/>
    </location>
    <ligand>
        <name>a ribonucleoside 5'-phosphate</name>
        <dbReference type="ChEBI" id="CHEBI:58043"/>
    </ligand>
</feature>
<feature type="binding site" evidence="2">
    <location>
        <position position="205"/>
    </location>
    <ligand>
        <name>ATP</name>
        <dbReference type="ChEBI" id="CHEBI:30616"/>
    </ligand>
</feature>
<name>KCY_LENED</name>
<evidence type="ECO:0000250" key="1"/>
<evidence type="ECO:0000255" key="2">
    <source>
        <dbReference type="HAMAP-Rule" id="MF_03172"/>
    </source>
</evidence>
<evidence type="ECO:0000269" key="3">
    <source>
    </source>
</evidence>
<comment type="function">
    <text evidence="2 3">Catalyzes the phosphorylation of pyrimidine nucleoside monophosphates at the expense of ATP. Plays an important role in de novo pyrimidine nucleotide biosynthesis. Has preference for UMP and CMP as phosphate acceptors, but can also use AMP and dCMP to a lesser extent. May play a role during the formation of basidiospores in the gill tissue.</text>
</comment>
<comment type="catalytic activity">
    <reaction evidence="2 3">
        <text>UMP + ATP = UDP + ADP</text>
        <dbReference type="Rhea" id="RHEA:24400"/>
        <dbReference type="ChEBI" id="CHEBI:30616"/>
        <dbReference type="ChEBI" id="CHEBI:57865"/>
        <dbReference type="ChEBI" id="CHEBI:58223"/>
        <dbReference type="ChEBI" id="CHEBI:456216"/>
        <dbReference type="EC" id="2.7.4.14"/>
    </reaction>
</comment>
<comment type="cofactor">
    <cofactor evidence="2">
        <name>Mg(2+)</name>
        <dbReference type="ChEBI" id="CHEBI:18420"/>
    </cofactor>
    <text evidence="2">Binds 1 Mg(2+) ion per monomer.</text>
</comment>
<comment type="subunit">
    <text evidence="2">Monomer.</text>
</comment>
<comment type="subcellular location">
    <subcellularLocation>
        <location evidence="2">Cytoplasm</location>
    </subcellularLocation>
    <subcellularLocation>
        <location evidence="2">Nucleus</location>
    </subcellularLocation>
    <text evidence="2">Predominantly cytoplasmic.</text>
</comment>
<comment type="domain">
    <text evidence="1">Consists of three domains, a large central CORE domain and two small peripheral domains, NMPbind and LID, which undergo movements during catalysis. The LID domain closes over the site of phosphoryl transfer upon GTP binding. Assembling and disassembling the active center during each catalytic cycle provides an effective means to prevent GTP hydrolysis (By similarity).</text>
</comment>
<comment type="similarity">
    <text evidence="2">Belongs to the adenylate kinase family. UMP-CMP kinase subfamily.</text>
</comment>